<sequence>MKKWQFVGTTALGATLLLGACGGGNGGSGNSDLKGEAKGDGSSTVAPIVEKLNEKWAQDHSDAKISAGQAGTGAGFQKFIAGDIDFADASRPIKDEEKQKLQDKNIKYKEFKIAQDGVTVAVNKENDFVDELDKQQLKAIYSGKAKTWKDVNSKWPDKKINAVSPNSSHGTYDFFENEVMNKEDIKAEKNADTNAIVSSVTKNKEGIGYFGYNFYVQNKDKLKEVKIKDENGKATEPTKKTIQDNSYALSRPLFIYVNEKALKDNKVMSEFIKFVLEDKGKAAEEAGYVAAPEKTYKSQLDDLKAFIDKNQKSDDKKSDDKKSEDKK</sequence>
<organism>
    <name type="scientific">Staphylococcus aureus (strain MW2)</name>
    <dbReference type="NCBI Taxonomy" id="196620"/>
    <lineage>
        <taxon>Bacteria</taxon>
        <taxon>Bacillati</taxon>
        <taxon>Bacillota</taxon>
        <taxon>Bacilli</taxon>
        <taxon>Bacillales</taxon>
        <taxon>Staphylococcaceae</taxon>
        <taxon>Staphylococcus</taxon>
    </lineage>
</organism>
<feature type="signal peptide" evidence="2">
    <location>
        <begin position="1"/>
        <end position="20"/>
    </location>
</feature>
<feature type="chain" id="PRO_0000281661" description="Phosphate-binding protein PstS">
    <location>
        <begin position="21"/>
        <end position="327"/>
    </location>
</feature>
<feature type="region of interest" description="Disordered" evidence="3">
    <location>
        <begin position="307"/>
        <end position="327"/>
    </location>
</feature>
<feature type="lipid moiety-binding region" description="N-palmitoyl cysteine" evidence="2">
    <location>
        <position position="21"/>
    </location>
</feature>
<feature type="lipid moiety-binding region" description="S-diacylglycerol cysteine" evidence="2">
    <location>
        <position position="21"/>
    </location>
</feature>
<protein>
    <recommendedName>
        <fullName>Phosphate-binding protein PstS</fullName>
        <shortName>PBP</shortName>
    </recommendedName>
</protein>
<dbReference type="EMBL" id="BA000033">
    <property type="protein sequence ID" value="BAB95142.1"/>
    <property type="molecule type" value="Genomic_DNA"/>
</dbReference>
<dbReference type="RefSeq" id="WP_000759232.1">
    <property type="nucleotide sequence ID" value="NC_003923.1"/>
</dbReference>
<dbReference type="SMR" id="Q7A0X7"/>
<dbReference type="KEGG" id="sam:MW1277"/>
<dbReference type="HOGENOM" id="CLU_026228_1_1_9"/>
<dbReference type="GO" id="GO:0005886">
    <property type="term" value="C:plasma membrane"/>
    <property type="evidence" value="ECO:0007669"/>
    <property type="project" value="UniProtKB-SubCell"/>
</dbReference>
<dbReference type="GO" id="GO:0042301">
    <property type="term" value="F:phosphate ion binding"/>
    <property type="evidence" value="ECO:0007669"/>
    <property type="project" value="InterPro"/>
</dbReference>
<dbReference type="GO" id="GO:0006817">
    <property type="term" value="P:phosphate ion transport"/>
    <property type="evidence" value="ECO:0007669"/>
    <property type="project" value="UniProtKB-KW"/>
</dbReference>
<dbReference type="CDD" id="cd13654">
    <property type="entry name" value="PBP2_phosphate_like_2"/>
    <property type="match status" value="1"/>
</dbReference>
<dbReference type="Gene3D" id="3.40.190.10">
    <property type="entry name" value="Periplasmic binding protein-like II"/>
    <property type="match status" value="2"/>
</dbReference>
<dbReference type="InterPro" id="IPR024370">
    <property type="entry name" value="PBP_domain"/>
</dbReference>
<dbReference type="InterPro" id="IPR011862">
    <property type="entry name" value="Phos-bd"/>
</dbReference>
<dbReference type="InterPro" id="IPR050811">
    <property type="entry name" value="Phosphate_ABC_transporter"/>
</dbReference>
<dbReference type="NCBIfam" id="TIGR02136">
    <property type="entry name" value="ptsS_2"/>
    <property type="match status" value="1"/>
</dbReference>
<dbReference type="PANTHER" id="PTHR30570">
    <property type="entry name" value="PERIPLASMIC PHOSPHATE BINDING COMPONENT OF PHOSPHATE ABC TRANSPORTER"/>
    <property type="match status" value="1"/>
</dbReference>
<dbReference type="PANTHER" id="PTHR30570:SF1">
    <property type="entry name" value="PHOSPHATE-BINDING PROTEIN PSTS"/>
    <property type="match status" value="1"/>
</dbReference>
<dbReference type="Pfam" id="PF12849">
    <property type="entry name" value="PBP_like_2"/>
    <property type="match status" value="1"/>
</dbReference>
<dbReference type="SUPFAM" id="SSF53850">
    <property type="entry name" value="Periplasmic binding protein-like II"/>
    <property type="match status" value="1"/>
</dbReference>
<dbReference type="PROSITE" id="PS51257">
    <property type="entry name" value="PROKAR_LIPOPROTEIN"/>
    <property type="match status" value="1"/>
</dbReference>
<comment type="function">
    <text evidence="1">Part of the ABC transporter complex PstSACB involved in phosphate import.</text>
</comment>
<comment type="subunit">
    <text evidence="4">The complex is composed of two ATP-binding proteins (PstB), two transmembrane proteins (PstC and PstA) and a solute-binding protein (PstS).</text>
</comment>
<comment type="subcellular location">
    <subcellularLocation>
        <location evidence="4">Cell membrane</location>
        <topology evidence="4">Lipid-anchor</topology>
    </subcellularLocation>
</comment>
<comment type="similarity">
    <text evidence="4">Belongs to the PstS family.</text>
</comment>
<gene>
    <name type="primary">pstS</name>
    <name type="ordered locus">MW1277</name>
</gene>
<name>PSTS_STAAW</name>
<accession>Q7A0X7</accession>
<keyword id="KW-1003">Cell membrane</keyword>
<keyword id="KW-0449">Lipoprotein</keyword>
<keyword id="KW-0472">Membrane</keyword>
<keyword id="KW-0564">Palmitate</keyword>
<keyword id="KW-0592">Phosphate transport</keyword>
<keyword id="KW-0732">Signal</keyword>
<keyword id="KW-0813">Transport</keyword>
<proteinExistence type="inferred from homology"/>
<evidence type="ECO:0000250" key="1"/>
<evidence type="ECO:0000255" key="2">
    <source>
        <dbReference type="PROSITE-ProRule" id="PRU00303"/>
    </source>
</evidence>
<evidence type="ECO:0000256" key="3">
    <source>
        <dbReference type="SAM" id="MobiDB-lite"/>
    </source>
</evidence>
<evidence type="ECO:0000305" key="4"/>
<reference key="1">
    <citation type="journal article" date="2002" name="Lancet">
        <title>Genome and virulence determinants of high virulence community-acquired MRSA.</title>
        <authorList>
            <person name="Baba T."/>
            <person name="Takeuchi F."/>
            <person name="Kuroda M."/>
            <person name="Yuzawa H."/>
            <person name="Aoki K."/>
            <person name="Oguchi A."/>
            <person name="Nagai Y."/>
            <person name="Iwama N."/>
            <person name="Asano K."/>
            <person name="Naimi T."/>
            <person name="Kuroda H."/>
            <person name="Cui L."/>
            <person name="Yamamoto K."/>
            <person name="Hiramatsu K."/>
        </authorList>
    </citation>
    <scope>NUCLEOTIDE SEQUENCE [LARGE SCALE GENOMIC DNA]</scope>
    <source>
        <strain>MW2</strain>
    </source>
</reference>